<name>COAD_PECCP</name>
<accession>C6DIB6</accession>
<gene>
    <name evidence="1" type="primary">coaD</name>
    <name type="ordered locus">PC1_4095</name>
</gene>
<sequence length="159" mass="17601">MTTKAIYPGTFDPLTNGHLDLLTRASRLFDHVVLAIAASPSKQTLFTLDERVALAKGATEHLSNVDVIGFSDLMAHFAQQQNANILVRGLRAVADFEYELQLAKMNHHLMPTLESVFLMPSEEWSFISSSLVKEVARHGGDVSHFLPDAIVSALMEKLR</sequence>
<reference key="1">
    <citation type="submission" date="2009-07" db="EMBL/GenBank/DDBJ databases">
        <title>Complete sequence of Pectobacterium carotovorum subsp. carotovorum PC1.</title>
        <authorList>
            <consortium name="US DOE Joint Genome Institute"/>
            <person name="Lucas S."/>
            <person name="Copeland A."/>
            <person name="Lapidus A."/>
            <person name="Glavina del Rio T."/>
            <person name="Tice H."/>
            <person name="Bruce D."/>
            <person name="Goodwin L."/>
            <person name="Pitluck S."/>
            <person name="Munk A.C."/>
            <person name="Brettin T."/>
            <person name="Detter J.C."/>
            <person name="Han C."/>
            <person name="Tapia R."/>
            <person name="Larimer F."/>
            <person name="Land M."/>
            <person name="Hauser L."/>
            <person name="Kyrpides N."/>
            <person name="Mikhailova N."/>
            <person name="Balakrishnan V."/>
            <person name="Glasner J."/>
            <person name="Perna N.T."/>
        </authorList>
    </citation>
    <scope>NUCLEOTIDE SEQUENCE [LARGE SCALE GENOMIC DNA]</scope>
    <source>
        <strain>PC1</strain>
    </source>
</reference>
<organism>
    <name type="scientific">Pectobacterium carotovorum subsp. carotovorum (strain PC1)</name>
    <dbReference type="NCBI Taxonomy" id="561230"/>
    <lineage>
        <taxon>Bacteria</taxon>
        <taxon>Pseudomonadati</taxon>
        <taxon>Pseudomonadota</taxon>
        <taxon>Gammaproteobacteria</taxon>
        <taxon>Enterobacterales</taxon>
        <taxon>Pectobacteriaceae</taxon>
        <taxon>Pectobacterium</taxon>
    </lineage>
</organism>
<protein>
    <recommendedName>
        <fullName evidence="1">Phosphopantetheine adenylyltransferase</fullName>
        <ecNumber evidence="1">2.7.7.3</ecNumber>
    </recommendedName>
    <alternativeName>
        <fullName evidence="1">Dephospho-CoA pyrophosphorylase</fullName>
    </alternativeName>
    <alternativeName>
        <fullName evidence="1">Pantetheine-phosphate adenylyltransferase</fullName>
        <shortName evidence="1">PPAT</shortName>
    </alternativeName>
</protein>
<keyword id="KW-0067">ATP-binding</keyword>
<keyword id="KW-0173">Coenzyme A biosynthesis</keyword>
<keyword id="KW-0963">Cytoplasm</keyword>
<keyword id="KW-0460">Magnesium</keyword>
<keyword id="KW-0547">Nucleotide-binding</keyword>
<keyword id="KW-0548">Nucleotidyltransferase</keyword>
<keyword id="KW-0808">Transferase</keyword>
<evidence type="ECO:0000255" key="1">
    <source>
        <dbReference type="HAMAP-Rule" id="MF_00151"/>
    </source>
</evidence>
<comment type="function">
    <text evidence="1">Reversibly transfers an adenylyl group from ATP to 4'-phosphopantetheine, yielding dephospho-CoA (dPCoA) and pyrophosphate.</text>
</comment>
<comment type="catalytic activity">
    <reaction evidence="1">
        <text>(R)-4'-phosphopantetheine + ATP + H(+) = 3'-dephospho-CoA + diphosphate</text>
        <dbReference type="Rhea" id="RHEA:19801"/>
        <dbReference type="ChEBI" id="CHEBI:15378"/>
        <dbReference type="ChEBI" id="CHEBI:30616"/>
        <dbReference type="ChEBI" id="CHEBI:33019"/>
        <dbReference type="ChEBI" id="CHEBI:57328"/>
        <dbReference type="ChEBI" id="CHEBI:61723"/>
        <dbReference type="EC" id="2.7.7.3"/>
    </reaction>
</comment>
<comment type="cofactor">
    <cofactor evidence="1">
        <name>Mg(2+)</name>
        <dbReference type="ChEBI" id="CHEBI:18420"/>
    </cofactor>
</comment>
<comment type="pathway">
    <text evidence="1">Cofactor biosynthesis; coenzyme A biosynthesis; CoA from (R)-pantothenate: step 4/5.</text>
</comment>
<comment type="subunit">
    <text evidence="1">Homohexamer.</text>
</comment>
<comment type="subcellular location">
    <subcellularLocation>
        <location evidence="1">Cytoplasm</location>
    </subcellularLocation>
</comment>
<comment type="similarity">
    <text evidence="1">Belongs to the bacterial CoaD family.</text>
</comment>
<proteinExistence type="inferred from homology"/>
<feature type="chain" id="PRO_1000203430" description="Phosphopantetheine adenylyltransferase">
    <location>
        <begin position="1"/>
        <end position="159"/>
    </location>
</feature>
<feature type="binding site" evidence="1">
    <location>
        <begin position="10"/>
        <end position="11"/>
    </location>
    <ligand>
        <name>ATP</name>
        <dbReference type="ChEBI" id="CHEBI:30616"/>
    </ligand>
</feature>
<feature type="binding site" evidence="1">
    <location>
        <position position="10"/>
    </location>
    <ligand>
        <name>substrate</name>
    </ligand>
</feature>
<feature type="binding site" evidence="1">
    <location>
        <position position="18"/>
    </location>
    <ligand>
        <name>ATP</name>
        <dbReference type="ChEBI" id="CHEBI:30616"/>
    </ligand>
</feature>
<feature type="binding site" evidence="1">
    <location>
        <position position="42"/>
    </location>
    <ligand>
        <name>substrate</name>
    </ligand>
</feature>
<feature type="binding site" evidence="1">
    <location>
        <position position="74"/>
    </location>
    <ligand>
        <name>substrate</name>
    </ligand>
</feature>
<feature type="binding site" evidence="1">
    <location>
        <position position="88"/>
    </location>
    <ligand>
        <name>substrate</name>
    </ligand>
</feature>
<feature type="binding site" evidence="1">
    <location>
        <begin position="89"/>
        <end position="91"/>
    </location>
    <ligand>
        <name>ATP</name>
        <dbReference type="ChEBI" id="CHEBI:30616"/>
    </ligand>
</feature>
<feature type="binding site" evidence="1">
    <location>
        <position position="99"/>
    </location>
    <ligand>
        <name>ATP</name>
        <dbReference type="ChEBI" id="CHEBI:30616"/>
    </ligand>
</feature>
<feature type="binding site" evidence="1">
    <location>
        <begin position="124"/>
        <end position="130"/>
    </location>
    <ligand>
        <name>ATP</name>
        <dbReference type="ChEBI" id="CHEBI:30616"/>
    </ligand>
</feature>
<feature type="site" description="Transition state stabilizer" evidence="1">
    <location>
        <position position="18"/>
    </location>
</feature>
<dbReference type="EC" id="2.7.7.3" evidence="1"/>
<dbReference type="EMBL" id="CP001657">
    <property type="protein sequence ID" value="ACT15110.1"/>
    <property type="molecule type" value="Genomic_DNA"/>
</dbReference>
<dbReference type="RefSeq" id="WP_015842186.1">
    <property type="nucleotide sequence ID" value="NC_012917.1"/>
</dbReference>
<dbReference type="SMR" id="C6DIB6"/>
<dbReference type="STRING" id="561230.PC1_4095"/>
<dbReference type="KEGG" id="pct:PC1_4095"/>
<dbReference type="eggNOG" id="COG0669">
    <property type="taxonomic scope" value="Bacteria"/>
</dbReference>
<dbReference type="HOGENOM" id="CLU_100149_0_1_6"/>
<dbReference type="OrthoDB" id="9806661at2"/>
<dbReference type="UniPathway" id="UPA00241">
    <property type="reaction ID" value="UER00355"/>
</dbReference>
<dbReference type="Proteomes" id="UP000002736">
    <property type="component" value="Chromosome"/>
</dbReference>
<dbReference type="GO" id="GO:0005737">
    <property type="term" value="C:cytoplasm"/>
    <property type="evidence" value="ECO:0007669"/>
    <property type="project" value="UniProtKB-SubCell"/>
</dbReference>
<dbReference type="GO" id="GO:0005524">
    <property type="term" value="F:ATP binding"/>
    <property type="evidence" value="ECO:0007669"/>
    <property type="project" value="UniProtKB-KW"/>
</dbReference>
<dbReference type="GO" id="GO:0004595">
    <property type="term" value="F:pantetheine-phosphate adenylyltransferase activity"/>
    <property type="evidence" value="ECO:0007669"/>
    <property type="project" value="UniProtKB-UniRule"/>
</dbReference>
<dbReference type="GO" id="GO:0015937">
    <property type="term" value="P:coenzyme A biosynthetic process"/>
    <property type="evidence" value="ECO:0007669"/>
    <property type="project" value="UniProtKB-UniRule"/>
</dbReference>
<dbReference type="CDD" id="cd02163">
    <property type="entry name" value="PPAT"/>
    <property type="match status" value="1"/>
</dbReference>
<dbReference type="FunFam" id="3.40.50.620:FF:000012">
    <property type="entry name" value="Phosphopantetheine adenylyltransferase"/>
    <property type="match status" value="1"/>
</dbReference>
<dbReference type="Gene3D" id="3.40.50.620">
    <property type="entry name" value="HUPs"/>
    <property type="match status" value="1"/>
</dbReference>
<dbReference type="HAMAP" id="MF_00151">
    <property type="entry name" value="PPAT_bact"/>
    <property type="match status" value="1"/>
</dbReference>
<dbReference type="InterPro" id="IPR004821">
    <property type="entry name" value="Cyt_trans-like"/>
</dbReference>
<dbReference type="InterPro" id="IPR001980">
    <property type="entry name" value="PPAT"/>
</dbReference>
<dbReference type="InterPro" id="IPR014729">
    <property type="entry name" value="Rossmann-like_a/b/a_fold"/>
</dbReference>
<dbReference type="NCBIfam" id="TIGR01510">
    <property type="entry name" value="coaD_prev_kdtB"/>
    <property type="match status" value="1"/>
</dbReference>
<dbReference type="NCBIfam" id="TIGR00125">
    <property type="entry name" value="cyt_tran_rel"/>
    <property type="match status" value="1"/>
</dbReference>
<dbReference type="PANTHER" id="PTHR21342">
    <property type="entry name" value="PHOSPHOPANTETHEINE ADENYLYLTRANSFERASE"/>
    <property type="match status" value="1"/>
</dbReference>
<dbReference type="PANTHER" id="PTHR21342:SF1">
    <property type="entry name" value="PHOSPHOPANTETHEINE ADENYLYLTRANSFERASE"/>
    <property type="match status" value="1"/>
</dbReference>
<dbReference type="Pfam" id="PF01467">
    <property type="entry name" value="CTP_transf_like"/>
    <property type="match status" value="1"/>
</dbReference>
<dbReference type="PRINTS" id="PR01020">
    <property type="entry name" value="LPSBIOSNTHSS"/>
</dbReference>
<dbReference type="SUPFAM" id="SSF52374">
    <property type="entry name" value="Nucleotidylyl transferase"/>
    <property type="match status" value="1"/>
</dbReference>